<name>RLMN_BIFAA</name>
<sequence>MNDQPETGITPGGTSGAFRDVLSKDHARRGKPPLHFADMSEEERIGKAKELGLPKFRVKQLANHYYGHFDVNAEEFSDFPAARRSDAAEAFFPELIHEVTRQVADGGTTIKTLWRLFDGSLIESVLMRYPTRTTLCISSQVGCGMGCPFCATGQLGLTRNMSAGEIVEQVRVAAKAMRDGEVAGGSGRLSNIVFMGMGEPMGNYKSVLSAVRQISSMPPEGFGISARNITVSTVGVVPGIRKLAEEGIPVRLAVSLHAPSDELRDELVPMNKRFNTKQVLDAAHDYYLASKRRVSIEYALMRGINDQAEHAKLLAKRLNHYGDDWAHVNPIPLNPIEGSKWTASKPEDERRFLEILHNAGITATLRDTRGQDIDGACGQLAAKERD</sequence>
<comment type="function">
    <text evidence="1">Specifically methylates position 2 of adenine 2503 in 23S rRNA and position 2 of adenine 37 in tRNAs.</text>
</comment>
<comment type="catalytic activity">
    <reaction evidence="1">
        <text>adenosine(2503) in 23S rRNA + 2 reduced [2Fe-2S]-[ferredoxin] + 2 S-adenosyl-L-methionine = 2-methyladenosine(2503) in 23S rRNA + 5'-deoxyadenosine + L-methionine + 2 oxidized [2Fe-2S]-[ferredoxin] + S-adenosyl-L-homocysteine</text>
        <dbReference type="Rhea" id="RHEA:42916"/>
        <dbReference type="Rhea" id="RHEA-COMP:10000"/>
        <dbReference type="Rhea" id="RHEA-COMP:10001"/>
        <dbReference type="Rhea" id="RHEA-COMP:10152"/>
        <dbReference type="Rhea" id="RHEA-COMP:10282"/>
        <dbReference type="ChEBI" id="CHEBI:17319"/>
        <dbReference type="ChEBI" id="CHEBI:33737"/>
        <dbReference type="ChEBI" id="CHEBI:33738"/>
        <dbReference type="ChEBI" id="CHEBI:57844"/>
        <dbReference type="ChEBI" id="CHEBI:57856"/>
        <dbReference type="ChEBI" id="CHEBI:59789"/>
        <dbReference type="ChEBI" id="CHEBI:74411"/>
        <dbReference type="ChEBI" id="CHEBI:74497"/>
        <dbReference type="EC" id="2.1.1.192"/>
    </reaction>
</comment>
<comment type="catalytic activity">
    <reaction evidence="1">
        <text>adenosine(37) in tRNA + 2 reduced [2Fe-2S]-[ferredoxin] + 2 S-adenosyl-L-methionine = 2-methyladenosine(37) in tRNA + 5'-deoxyadenosine + L-methionine + 2 oxidized [2Fe-2S]-[ferredoxin] + S-adenosyl-L-homocysteine</text>
        <dbReference type="Rhea" id="RHEA:43332"/>
        <dbReference type="Rhea" id="RHEA-COMP:10000"/>
        <dbReference type="Rhea" id="RHEA-COMP:10001"/>
        <dbReference type="Rhea" id="RHEA-COMP:10162"/>
        <dbReference type="Rhea" id="RHEA-COMP:10485"/>
        <dbReference type="ChEBI" id="CHEBI:17319"/>
        <dbReference type="ChEBI" id="CHEBI:33737"/>
        <dbReference type="ChEBI" id="CHEBI:33738"/>
        <dbReference type="ChEBI" id="CHEBI:57844"/>
        <dbReference type="ChEBI" id="CHEBI:57856"/>
        <dbReference type="ChEBI" id="CHEBI:59789"/>
        <dbReference type="ChEBI" id="CHEBI:74411"/>
        <dbReference type="ChEBI" id="CHEBI:74497"/>
        <dbReference type="EC" id="2.1.1.192"/>
    </reaction>
</comment>
<comment type="cofactor">
    <cofactor evidence="1">
        <name>[4Fe-4S] cluster</name>
        <dbReference type="ChEBI" id="CHEBI:49883"/>
    </cofactor>
    <text evidence="1">Binds 1 [4Fe-4S] cluster. The cluster is coordinated with 3 cysteines and an exchangeable S-adenosyl-L-methionine.</text>
</comment>
<comment type="subcellular location">
    <subcellularLocation>
        <location evidence="1">Cytoplasm</location>
    </subcellularLocation>
</comment>
<comment type="miscellaneous">
    <text evidence="1">Reaction proceeds by a ping-pong mechanism involving intermediate methylation of a conserved cysteine residue.</text>
</comment>
<comment type="similarity">
    <text evidence="1">Belongs to the radical SAM superfamily. RlmN family.</text>
</comment>
<gene>
    <name evidence="1" type="primary">rlmN</name>
    <name type="ordered locus">BAD_0786</name>
</gene>
<reference key="1">
    <citation type="submission" date="2006-12" db="EMBL/GenBank/DDBJ databases">
        <title>Bifidobacterium adolescentis complete genome sequence.</title>
        <authorList>
            <person name="Suzuki T."/>
            <person name="Tsuda Y."/>
            <person name="Kanou N."/>
            <person name="Inoue T."/>
            <person name="Kumazaki K."/>
            <person name="Nagano S."/>
            <person name="Hirai S."/>
            <person name="Tanaka K."/>
            <person name="Watanabe K."/>
        </authorList>
    </citation>
    <scope>NUCLEOTIDE SEQUENCE [LARGE SCALE GENOMIC DNA]</scope>
    <source>
        <strain>ATCC 15703 / DSM 20083 / NCTC 11814 / E194a</strain>
    </source>
</reference>
<evidence type="ECO:0000255" key="1">
    <source>
        <dbReference type="HAMAP-Rule" id="MF_01849"/>
    </source>
</evidence>
<evidence type="ECO:0000255" key="2">
    <source>
        <dbReference type="PROSITE-ProRule" id="PRU01266"/>
    </source>
</evidence>
<proteinExistence type="inferred from homology"/>
<protein>
    <recommendedName>
        <fullName evidence="1">Probable dual-specificity RNA methyltransferase RlmN</fullName>
        <ecNumber evidence="1">2.1.1.192</ecNumber>
    </recommendedName>
    <alternativeName>
        <fullName evidence="1">23S rRNA (adenine(2503)-C(2))-methyltransferase</fullName>
    </alternativeName>
    <alternativeName>
        <fullName evidence="1">23S rRNA m2A2503 methyltransferase</fullName>
    </alternativeName>
    <alternativeName>
        <fullName evidence="1">Ribosomal RNA large subunit methyltransferase N</fullName>
    </alternativeName>
    <alternativeName>
        <fullName evidence="1">tRNA (adenine(37)-C(2))-methyltransferase</fullName>
    </alternativeName>
    <alternativeName>
        <fullName evidence="1">tRNA m2A37 methyltransferase</fullName>
    </alternativeName>
</protein>
<accession>A1A1I4</accession>
<keyword id="KW-0004">4Fe-4S</keyword>
<keyword id="KW-0963">Cytoplasm</keyword>
<keyword id="KW-1015">Disulfide bond</keyword>
<keyword id="KW-0408">Iron</keyword>
<keyword id="KW-0411">Iron-sulfur</keyword>
<keyword id="KW-0479">Metal-binding</keyword>
<keyword id="KW-0489">Methyltransferase</keyword>
<keyword id="KW-1185">Reference proteome</keyword>
<keyword id="KW-0698">rRNA processing</keyword>
<keyword id="KW-0949">S-adenosyl-L-methionine</keyword>
<keyword id="KW-0808">Transferase</keyword>
<keyword id="KW-0819">tRNA processing</keyword>
<feature type="chain" id="PRO_0000350050" description="Probable dual-specificity RNA methyltransferase RlmN">
    <location>
        <begin position="1"/>
        <end position="386"/>
    </location>
</feature>
<feature type="domain" description="Radical SAM core" evidence="2">
    <location>
        <begin position="129"/>
        <end position="372"/>
    </location>
</feature>
<feature type="active site" description="Proton acceptor" evidence="1">
    <location>
        <position position="123"/>
    </location>
</feature>
<feature type="active site" description="S-methylcysteine intermediate" evidence="1">
    <location>
        <position position="377"/>
    </location>
</feature>
<feature type="binding site" evidence="1">
    <location>
        <position position="143"/>
    </location>
    <ligand>
        <name>[4Fe-4S] cluster</name>
        <dbReference type="ChEBI" id="CHEBI:49883"/>
        <note>4Fe-4S-S-AdoMet</note>
    </ligand>
</feature>
<feature type="binding site" evidence="1">
    <location>
        <position position="147"/>
    </location>
    <ligand>
        <name>[4Fe-4S] cluster</name>
        <dbReference type="ChEBI" id="CHEBI:49883"/>
        <note>4Fe-4S-S-AdoMet</note>
    </ligand>
</feature>
<feature type="binding site" evidence="1">
    <location>
        <position position="150"/>
    </location>
    <ligand>
        <name>[4Fe-4S] cluster</name>
        <dbReference type="ChEBI" id="CHEBI:49883"/>
        <note>4Fe-4S-S-AdoMet</note>
    </ligand>
</feature>
<feature type="binding site" evidence="1">
    <location>
        <begin position="198"/>
        <end position="199"/>
    </location>
    <ligand>
        <name>S-adenosyl-L-methionine</name>
        <dbReference type="ChEBI" id="CHEBI:59789"/>
    </ligand>
</feature>
<feature type="binding site" evidence="1">
    <location>
        <position position="232"/>
    </location>
    <ligand>
        <name>S-adenosyl-L-methionine</name>
        <dbReference type="ChEBI" id="CHEBI:59789"/>
    </ligand>
</feature>
<feature type="binding site" evidence="1">
    <location>
        <begin position="255"/>
        <end position="257"/>
    </location>
    <ligand>
        <name>S-adenosyl-L-methionine</name>
        <dbReference type="ChEBI" id="CHEBI:59789"/>
    </ligand>
</feature>
<feature type="binding site" evidence="1">
    <location>
        <position position="334"/>
    </location>
    <ligand>
        <name>S-adenosyl-L-methionine</name>
        <dbReference type="ChEBI" id="CHEBI:59789"/>
    </ligand>
</feature>
<feature type="disulfide bond" description="(transient)" evidence="1">
    <location>
        <begin position="136"/>
        <end position="377"/>
    </location>
</feature>
<dbReference type="EC" id="2.1.1.192" evidence="1"/>
<dbReference type="EMBL" id="AP009256">
    <property type="protein sequence ID" value="BAF39567.1"/>
    <property type="molecule type" value="Genomic_DNA"/>
</dbReference>
<dbReference type="RefSeq" id="WP_003809321.1">
    <property type="nucleotide sequence ID" value="NZ_CAXVNC010000004.1"/>
</dbReference>
<dbReference type="SMR" id="A1A1I4"/>
<dbReference type="STRING" id="367928.BAD_0786"/>
<dbReference type="PaxDb" id="1680-BADO_0835"/>
<dbReference type="GeneID" id="4556838"/>
<dbReference type="KEGG" id="bad:BAD_0786"/>
<dbReference type="HOGENOM" id="CLU_029101_0_2_11"/>
<dbReference type="Proteomes" id="UP000008702">
    <property type="component" value="Chromosome"/>
</dbReference>
<dbReference type="GO" id="GO:0005737">
    <property type="term" value="C:cytoplasm"/>
    <property type="evidence" value="ECO:0007669"/>
    <property type="project" value="UniProtKB-SubCell"/>
</dbReference>
<dbReference type="GO" id="GO:0051539">
    <property type="term" value="F:4 iron, 4 sulfur cluster binding"/>
    <property type="evidence" value="ECO:0007669"/>
    <property type="project" value="UniProtKB-UniRule"/>
</dbReference>
<dbReference type="GO" id="GO:0046872">
    <property type="term" value="F:metal ion binding"/>
    <property type="evidence" value="ECO:0007669"/>
    <property type="project" value="UniProtKB-KW"/>
</dbReference>
<dbReference type="GO" id="GO:0070040">
    <property type="term" value="F:rRNA (adenine(2503)-C2-)-methyltransferase activity"/>
    <property type="evidence" value="ECO:0007669"/>
    <property type="project" value="UniProtKB-UniRule"/>
</dbReference>
<dbReference type="GO" id="GO:0019843">
    <property type="term" value="F:rRNA binding"/>
    <property type="evidence" value="ECO:0007669"/>
    <property type="project" value="UniProtKB-UniRule"/>
</dbReference>
<dbReference type="GO" id="GO:0002935">
    <property type="term" value="F:tRNA (adenine(37)-C2)-methyltransferase activity"/>
    <property type="evidence" value="ECO:0007669"/>
    <property type="project" value="UniProtKB-UniRule"/>
</dbReference>
<dbReference type="GO" id="GO:0000049">
    <property type="term" value="F:tRNA binding"/>
    <property type="evidence" value="ECO:0007669"/>
    <property type="project" value="UniProtKB-UniRule"/>
</dbReference>
<dbReference type="GO" id="GO:0070475">
    <property type="term" value="P:rRNA base methylation"/>
    <property type="evidence" value="ECO:0007669"/>
    <property type="project" value="UniProtKB-UniRule"/>
</dbReference>
<dbReference type="GO" id="GO:0030488">
    <property type="term" value="P:tRNA methylation"/>
    <property type="evidence" value="ECO:0007669"/>
    <property type="project" value="UniProtKB-UniRule"/>
</dbReference>
<dbReference type="CDD" id="cd01335">
    <property type="entry name" value="Radical_SAM"/>
    <property type="match status" value="1"/>
</dbReference>
<dbReference type="FunFam" id="3.20.20.70:FF:000014">
    <property type="entry name" value="Probable dual-specificity RNA methyltransferase RlmN"/>
    <property type="match status" value="1"/>
</dbReference>
<dbReference type="Gene3D" id="3.20.20.70">
    <property type="entry name" value="Aldolase class I"/>
    <property type="match status" value="1"/>
</dbReference>
<dbReference type="HAMAP" id="MF_01849">
    <property type="entry name" value="RNA_methyltr_RlmN"/>
    <property type="match status" value="1"/>
</dbReference>
<dbReference type="InterPro" id="IPR013785">
    <property type="entry name" value="Aldolase_TIM"/>
</dbReference>
<dbReference type="InterPro" id="IPR006638">
    <property type="entry name" value="Elp3/MiaA/NifB-like_rSAM"/>
</dbReference>
<dbReference type="InterPro" id="IPR040072">
    <property type="entry name" value="Methyltransferase_A"/>
</dbReference>
<dbReference type="InterPro" id="IPR027492">
    <property type="entry name" value="RNA_MTrfase_RlmN"/>
</dbReference>
<dbReference type="InterPro" id="IPR004383">
    <property type="entry name" value="rRNA_lsu_MTrfase_RlmN/Cfr"/>
</dbReference>
<dbReference type="InterPro" id="IPR007197">
    <property type="entry name" value="rSAM"/>
</dbReference>
<dbReference type="NCBIfam" id="TIGR00048">
    <property type="entry name" value="rRNA_mod_RlmN"/>
    <property type="match status" value="1"/>
</dbReference>
<dbReference type="PANTHER" id="PTHR30544">
    <property type="entry name" value="23S RRNA METHYLTRANSFERASE"/>
    <property type="match status" value="1"/>
</dbReference>
<dbReference type="PANTHER" id="PTHR30544:SF5">
    <property type="entry name" value="RADICAL SAM CORE DOMAIN-CONTAINING PROTEIN"/>
    <property type="match status" value="1"/>
</dbReference>
<dbReference type="Pfam" id="PF04055">
    <property type="entry name" value="Radical_SAM"/>
    <property type="match status" value="1"/>
</dbReference>
<dbReference type="PIRSF" id="PIRSF006004">
    <property type="entry name" value="CHP00048"/>
    <property type="match status" value="1"/>
</dbReference>
<dbReference type="SFLD" id="SFLDF00275">
    <property type="entry name" value="adenosine_C2_methyltransferase"/>
    <property type="match status" value="1"/>
</dbReference>
<dbReference type="SFLD" id="SFLDG01062">
    <property type="entry name" value="methyltransferase_(Class_A)"/>
    <property type="match status" value="1"/>
</dbReference>
<dbReference type="SMART" id="SM00729">
    <property type="entry name" value="Elp3"/>
    <property type="match status" value="1"/>
</dbReference>
<dbReference type="SUPFAM" id="SSF102114">
    <property type="entry name" value="Radical SAM enzymes"/>
    <property type="match status" value="1"/>
</dbReference>
<dbReference type="PROSITE" id="PS51918">
    <property type="entry name" value="RADICAL_SAM"/>
    <property type="match status" value="1"/>
</dbReference>
<organism>
    <name type="scientific">Bifidobacterium adolescentis (strain ATCC 15703 / DSM 20083 / NCTC 11814 / E194a)</name>
    <dbReference type="NCBI Taxonomy" id="367928"/>
    <lineage>
        <taxon>Bacteria</taxon>
        <taxon>Bacillati</taxon>
        <taxon>Actinomycetota</taxon>
        <taxon>Actinomycetes</taxon>
        <taxon>Bifidobacteriales</taxon>
        <taxon>Bifidobacteriaceae</taxon>
        <taxon>Bifidobacterium</taxon>
    </lineage>
</organism>